<evidence type="ECO:0000255" key="1">
    <source>
        <dbReference type="HAMAP-Rule" id="MF_01521"/>
    </source>
</evidence>
<gene>
    <name evidence="1" type="primary">mntP</name>
    <name type="ordered locus">YPTB1630</name>
</gene>
<name>MNTP_YERPS</name>
<dbReference type="EMBL" id="BX936398">
    <property type="protein sequence ID" value="CAH20869.1"/>
    <property type="molecule type" value="Genomic_DNA"/>
</dbReference>
<dbReference type="RefSeq" id="WP_002211065.1">
    <property type="nucleotide sequence ID" value="NZ_CP009712.1"/>
</dbReference>
<dbReference type="GeneID" id="57976826"/>
<dbReference type="KEGG" id="ypo:BZ17_872"/>
<dbReference type="KEGG" id="yps:YPTB1630"/>
<dbReference type="PATRIC" id="fig|273123.14.peg.926"/>
<dbReference type="Proteomes" id="UP000001011">
    <property type="component" value="Chromosome"/>
</dbReference>
<dbReference type="GO" id="GO:0005886">
    <property type="term" value="C:plasma membrane"/>
    <property type="evidence" value="ECO:0007669"/>
    <property type="project" value="UniProtKB-SubCell"/>
</dbReference>
<dbReference type="GO" id="GO:0005384">
    <property type="term" value="F:manganese ion transmembrane transporter activity"/>
    <property type="evidence" value="ECO:0007669"/>
    <property type="project" value="UniProtKB-UniRule"/>
</dbReference>
<dbReference type="HAMAP" id="MF_01521">
    <property type="entry name" value="MntP_pump"/>
    <property type="match status" value="1"/>
</dbReference>
<dbReference type="InterPro" id="IPR003810">
    <property type="entry name" value="Mntp/YtaF"/>
</dbReference>
<dbReference type="InterPro" id="IPR022929">
    <property type="entry name" value="Put_MntP"/>
</dbReference>
<dbReference type="NCBIfam" id="NF008546">
    <property type="entry name" value="PRK11469.1"/>
    <property type="match status" value="1"/>
</dbReference>
<dbReference type="PANTHER" id="PTHR35529">
    <property type="entry name" value="MANGANESE EFFLUX PUMP MNTP-RELATED"/>
    <property type="match status" value="1"/>
</dbReference>
<dbReference type="PANTHER" id="PTHR35529:SF1">
    <property type="entry name" value="MANGANESE EFFLUX PUMP MNTP-RELATED"/>
    <property type="match status" value="1"/>
</dbReference>
<dbReference type="Pfam" id="PF02659">
    <property type="entry name" value="Mntp"/>
    <property type="match status" value="1"/>
</dbReference>
<protein>
    <recommendedName>
        <fullName evidence="1">Putative manganese efflux pump MntP</fullName>
    </recommendedName>
</protein>
<sequence length="189" mass="20660">MNLSATIILAFAMSMDAFAASIGKGATLYKPRFREALRTGLIFGVIEAITPLIGWCIGLFASQYIMEWDHWIAFSLLFILGCRMIFEGMKQRVAETEKMRSHSFWVLVTTAIATSLDAMAIGVGLAFLQVDIVHTAMAIGLATMIMATLGMLIGRYIGPLLGKRAEIIGGIVLIGIGFNILYEHMHLTA</sequence>
<organism>
    <name type="scientific">Yersinia pseudotuberculosis serotype I (strain IP32953)</name>
    <dbReference type="NCBI Taxonomy" id="273123"/>
    <lineage>
        <taxon>Bacteria</taxon>
        <taxon>Pseudomonadati</taxon>
        <taxon>Pseudomonadota</taxon>
        <taxon>Gammaproteobacteria</taxon>
        <taxon>Enterobacterales</taxon>
        <taxon>Yersiniaceae</taxon>
        <taxon>Yersinia</taxon>
    </lineage>
</organism>
<feature type="chain" id="PRO_0000155676" description="Putative manganese efflux pump MntP">
    <location>
        <begin position="1"/>
        <end position="189"/>
    </location>
</feature>
<feature type="transmembrane region" description="Helical" evidence="1">
    <location>
        <begin position="3"/>
        <end position="23"/>
    </location>
</feature>
<feature type="transmembrane region" description="Helical" evidence="1">
    <location>
        <begin position="41"/>
        <end position="61"/>
    </location>
</feature>
<feature type="transmembrane region" description="Helical" evidence="1">
    <location>
        <begin position="65"/>
        <end position="85"/>
    </location>
</feature>
<feature type="transmembrane region" description="Helical" evidence="1">
    <location>
        <begin position="104"/>
        <end position="124"/>
    </location>
</feature>
<feature type="transmembrane region" description="Helical" evidence="1">
    <location>
        <begin position="132"/>
        <end position="152"/>
    </location>
</feature>
<feature type="transmembrane region" description="Helical" evidence="1">
    <location>
        <begin position="167"/>
        <end position="187"/>
    </location>
</feature>
<accession>Q66BY6</accession>
<reference key="1">
    <citation type="journal article" date="2004" name="Proc. Natl. Acad. Sci. U.S.A.">
        <title>Insights into the evolution of Yersinia pestis through whole-genome comparison with Yersinia pseudotuberculosis.</title>
        <authorList>
            <person name="Chain P.S.G."/>
            <person name="Carniel E."/>
            <person name="Larimer F.W."/>
            <person name="Lamerdin J."/>
            <person name="Stoutland P.O."/>
            <person name="Regala W.M."/>
            <person name="Georgescu A.M."/>
            <person name="Vergez L.M."/>
            <person name="Land M.L."/>
            <person name="Motin V.L."/>
            <person name="Brubaker R.R."/>
            <person name="Fowler J."/>
            <person name="Hinnebusch J."/>
            <person name="Marceau M."/>
            <person name="Medigue C."/>
            <person name="Simonet M."/>
            <person name="Chenal-Francisque V."/>
            <person name="Souza B."/>
            <person name="Dacheux D."/>
            <person name="Elliott J.M."/>
            <person name="Derbise A."/>
            <person name="Hauser L.J."/>
            <person name="Garcia E."/>
        </authorList>
    </citation>
    <scope>NUCLEOTIDE SEQUENCE [LARGE SCALE GENOMIC DNA]</scope>
    <source>
        <strain>IP32953</strain>
    </source>
</reference>
<comment type="function">
    <text evidence="1">Probably functions as a manganese efflux pump.</text>
</comment>
<comment type="subcellular location">
    <subcellularLocation>
        <location evidence="1">Cell inner membrane</location>
        <topology evidence="1">Multi-pass membrane protein</topology>
    </subcellularLocation>
</comment>
<comment type="similarity">
    <text evidence="1">Belongs to the MntP (TC 9.B.29) family.</text>
</comment>
<proteinExistence type="inferred from homology"/>
<keyword id="KW-0997">Cell inner membrane</keyword>
<keyword id="KW-1003">Cell membrane</keyword>
<keyword id="KW-0406">Ion transport</keyword>
<keyword id="KW-0464">Manganese</keyword>
<keyword id="KW-0472">Membrane</keyword>
<keyword id="KW-0812">Transmembrane</keyword>
<keyword id="KW-1133">Transmembrane helix</keyword>
<keyword id="KW-0813">Transport</keyword>